<reference key="1">
    <citation type="journal article" date="1997" name="J. Biol. Chem.">
        <title>Characterization of PKI-gamma, a novel isoform of the protein kinase inhibitor of cAMP-dependent protein kinase.</title>
        <authorList>
            <person name="Collins S.P."/>
            <person name="Uhler M.D."/>
        </authorList>
    </citation>
    <scope>NUCLEOTIDE SEQUENCE [MRNA]</scope>
    <source>
        <strain>C57BL/6J</strain>
    </source>
</reference>
<reference key="2">
    <citation type="journal article" date="2004" name="Genome Res.">
        <title>The status, quality, and expansion of the NIH full-length cDNA project: the Mammalian Gene Collection (MGC).</title>
        <authorList>
            <consortium name="The MGC Project Team"/>
        </authorList>
    </citation>
    <scope>NUCLEOTIDE SEQUENCE [LARGE SCALE MRNA]</scope>
    <source>
        <strain>FVB/N-3</strain>
        <tissue>Mammary gland</tissue>
    </source>
</reference>
<reference key="3">
    <citation type="journal article" date="2004" name="Mol. Cell. Proteomics">
        <title>Phosphoproteomic analysis of the developing mouse brain.</title>
        <authorList>
            <person name="Ballif B.A."/>
            <person name="Villen J."/>
            <person name="Beausoleil S.A."/>
            <person name="Schwartz D."/>
            <person name="Gygi S.P."/>
        </authorList>
    </citation>
    <scope>IDENTIFICATION BY MASS SPECTROMETRY [LARGE SCALE ANALYSIS]</scope>
    <source>
        <tissue>Embryonic brain</tissue>
    </source>
</reference>
<name>IPKG_MOUSE</name>
<accession>O70139</accession>
<gene>
    <name type="primary">Pkig</name>
</gene>
<organism>
    <name type="scientific">Mus musculus</name>
    <name type="common">Mouse</name>
    <dbReference type="NCBI Taxonomy" id="10090"/>
    <lineage>
        <taxon>Eukaryota</taxon>
        <taxon>Metazoa</taxon>
        <taxon>Chordata</taxon>
        <taxon>Craniata</taxon>
        <taxon>Vertebrata</taxon>
        <taxon>Euteleostomi</taxon>
        <taxon>Mammalia</taxon>
        <taxon>Eutheria</taxon>
        <taxon>Euarchontoglires</taxon>
        <taxon>Glires</taxon>
        <taxon>Rodentia</taxon>
        <taxon>Myomorpha</taxon>
        <taxon>Muroidea</taxon>
        <taxon>Muridae</taxon>
        <taxon>Murinae</taxon>
        <taxon>Mus</taxon>
        <taxon>Mus</taxon>
    </lineage>
</organism>
<keyword id="KW-0649">Protein kinase inhibitor</keyword>
<keyword id="KW-1185">Reference proteome</keyword>
<sequence>MMEVESSYSDFISCDRTGRRNAVPDIQGDSEAVSVRKLAGDMGELALEGAEGQAEGSTPDKEASSQPESSDANTSS</sequence>
<dbReference type="EMBL" id="U97170">
    <property type="protein sequence ID" value="AAC09065.1"/>
    <property type="molecule type" value="mRNA"/>
</dbReference>
<dbReference type="EMBL" id="BC026550">
    <property type="protein sequence ID" value="AAH26550.1"/>
    <property type="molecule type" value="mRNA"/>
</dbReference>
<dbReference type="CCDS" id="CCDS17014.1"/>
<dbReference type="RefSeq" id="NP_001034479.1">
    <property type="nucleotide sequence ID" value="NM_001039390.3"/>
</dbReference>
<dbReference type="RefSeq" id="NP_001034480.1">
    <property type="nucleotide sequence ID" value="NM_001039391.2"/>
</dbReference>
<dbReference type="RefSeq" id="NP_001157525.1">
    <property type="nucleotide sequence ID" value="NM_001164053.2"/>
</dbReference>
<dbReference type="RefSeq" id="NP_001157527.1">
    <property type="nucleotide sequence ID" value="NM_001164055.1"/>
</dbReference>
<dbReference type="RefSeq" id="NP_001407588.1">
    <property type="nucleotide sequence ID" value="NM_001420659.1"/>
</dbReference>
<dbReference type="RefSeq" id="NP_001407589.1">
    <property type="nucleotide sequence ID" value="NM_001420660.1"/>
</dbReference>
<dbReference type="RefSeq" id="NP_001407590.1">
    <property type="nucleotide sequence ID" value="NM_001420661.1"/>
</dbReference>
<dbReference type="RefSeq" id="NP_001407591.1">
    <property type="nucleotide sequence ID" value="NM_001420662.1"/>
</dbReference>
<dbReference type="RefSeq" id="NP_001407592.1">
    <property type="nucleotide sequence ID" value="NM_001420663.1"/>
</dbReference>
<dbReference type="RefSeq" id="NP_001407593.1">
    <property type="nucleotide sequence ID" value="NM_001420664.1"/>
</dbReference>
<dbReference type="RefSeq" id="NP_001407594.1">
    <property type="nucleotide sequence ID" value="NM_001420665.1"/>
</dbReference>
<dbReference type="RefSeq" id="NP_001407595.1">
    <property type="nucleotide sequence ID" value="NM_001420666.1"/>
</dbReference>
<dbReference type="RefSeq" id="NP_001407597.1">
    <property type="nucleotide sequence ID" value="NM_001420668.1"/>
</dbReference>
<dbReference type="RefSeq" id="NP_001407598.1">
    <property type="nucleotide sequence ID" value="NM_001420669.1"/>
</dbReference>
<dbReference type="RefSeq" id="NP_001407599.1">
    <property type="nucleotide sequence ID" value="NM_001420670.1"/>
</dbReference>
<dbReference type="RefSeq" id="NP_001407600.1">
    <property type="nucleotide sequence ID" value="NM_001420671.1"/>
</dbReference>
<dbReference type="RefSeq" id="NP_001407601.1">
    <property type="nucleotide sequence ID" value="NM_001420672.1"/>
</dbReference>
<dbReference type="RefSeq" id="NP_035236.1">
    <property type="nucleotide sequence ID" value="NM_011106.3"/>
</dbReference>
<dbReference type="RefSeq" id="XP_006498989.1">
    <property type="nucleotide sequence ID" value="XM_006498926.3"/>
</dbReference>
<dbReference type="RefSeq" id="XP_006498990.1">
    <property type="nucleotide sequence ID" value="XM_006498927.1"/>
</dbReference>
<dbReference type="BioGRID" id="202209">
    <property type="interactions" value="1"/>
</dbReference>
<dbReference type="FunCoup" id="O70139">
    <property type="interactions" value="1416"/>
</dbReference>
<dbReference type="STRING" id="10090.ENSMUSP00000105027"/>
<dbReference type="PhosphoSitePlus" id="O70139"/>
<dbReference type="PaxDb" id="10090-ENSMUSP00000105027"/>
<dbReference type="ProteomicsDB" id="269497"/>
<dbReference type="Pumba" id="O70139"/>
<dbReference type="Antibodypedia" id="27423">
    <property type="antibodies" value="70 antibodies from 17 providers"/>
</dbReference>
<dbReference type="DNASU" id="18769"/>
<dbReference type="Ensembl" id="ENSMUST00000064703.13">
    <property type="protein sequence ID" value="ENSMUSP00000068344.7"/>
    <property type="gene ID" value="ENSMUSG00000035268.15"/>
</dbReference>
<dbReference type="Ensembl" id="ENSMUST00000099105.9">
    <property type="protein sequence ID" value="ENSMUSP00000096704.3"/>
    <property type="gene ID" value="ENSMUSG00000035268.15"/>
</dbReference>
<dbReference type="Ensembl" id="ENSMUST00000109400.3">
    <property type="protein sequence ID" value="ENSMUSP00000105027.3"/>
    <property type="gene ID" value="ENSMUSG00000035268.15"/>
</dbReference>
<dbReference type="Ensembl" id="ENSMUST00000126182.8">
    <property type="protein sequence ID" value="ENSMUSP00000120145.2"/>
    <property type="gene ID" value="ENSMUSG00000035268.15"/>
</dbReference>
<dbReference type="Ensembl" id="ENSMUST00000164399.8">
    <property type="protein sequence ID" value="ENSMUSP00000126223.2"/>
    <property type="gene ID" value="ENSMUSG00000035268.15"/>
</dbReference>
<dbReference type="GeneID" id="18769"/>
<dbReference type="KEGG" id="mmu:18769"/>
<dbReference type="UCSC" id="uc008nth.2">
    <property type="organism name" value="mouse"/>
</dbReference>
<dbReference type="AGR" id="MGI:1343086"/>
<dbReference type="CTD" id="11142"/>
<dbReference type="MGI" id="MGI:1343086">
    <property type="gene designation" value="Pkig"/>
</dbReference>
<dbReference type="VEuPathDB" id="HostDB:ENSMUSG00000035268"/>
<dbReference type="eggNOG" id="ENOG502SBS3">
    <property type="taxonomic scope" value="Eukaryota"/>
</dbReference>
<dbReference type="GeneTree" id="ENSGT00390000002707"/>
<dbReference type="InParanoid" id="O70139"/>
<dbReference type="OMA" id="TRDSHIF"/>
<dbReference type="PhylomeDB" id="O70139"/>
<dbReference type="TreeFam" id="TF330809"/>
<dbReference type="BioGRID-ORCS" id="18769">
    <property type="hits" value="4 hits in 77 CRISPR screens"/>
</dbReference>
<dbReference type="ChiTaRS" id="Pkig">
    <property type="organism name" value="mouse"/>
</dbReference>
<dbReference type="PRO" id="PR:O70139"/>
<dbReference type="Proteomes" id="UP000000589">
    <property type="component" value="Chromosome 2"/>
</dbReference>
<dbReference type="RNAct" id="O70139">
    <property type="molecule type" value="protein"/>
</dbReference>
<dbReference type="Bgee" id="ENSMUSG00000035268">
    <property type="expression patterns" value="Expressed in otic placode and 263 other cell types or tissues"/>
</dbReference>
<dbReference type="ExpressionAtlas" id="O70139">
    <property type="expression patterns" value="baseline and differential"/>
</dbReference>
<dbReference type="GO" id="GO:0004862">
    <property type="term" value="F:cAMP-dependent protein kinase inhibitor activity"/>
    <property type="evidence" value="ECO:0000314"/>
    <property type="project" value="MGI"/>
</dbReference>
<dbReference type="GO" id="GO:0042308">
    <property type="term" value="P:negative regulation of protein import into nucleus"/>
    <property type="evidence" value="ECO:0000314"/>
    <property type="project" value="MGI"/>
</dbReference>
<dbReference type="GO" id="GO:0000122">
    <property type="term" value="P:negative regulation of transcription by RNA polymerase II"/>
    <property type="evidence" value="ECO:0000314"/>
    <property type="project" value="MGI"/>
</dbReference>
<dbReference type="InterPro" id="IPR004171">
    <property type="entry name" value="cAMP_dep_PKI"/>
</dbReference>
<dbReference type="PANTHER" id="PTHR15416">
    <property type="entry name" value="CAMP-DEPENDENT PROTEIN KINASE INHIBITOR/PKI"/>
    <property type="match status" value="1"/>
</dbReference>
<dbReference type="Pfam" id="PF02827">
    <property type="entry name" value="PKI"/>
    <property type="match status" value="1"/>
</dbReference>
<dbReference type="PIRSF" id="PIRSF001667">
    <property type="entry name" value="PKI"/>
    <property type="match status" value="1"/>
</dbReference>
<proteinExistence type="evidence at protein level"/>
<feature type="chain" id="PRO_0000154543" description="cAMP-dependent protein kinase inhibitor gamma">
    <location>
        <begin position="1"/>
        <end position="76"/>
    </location>
</feature>
<feature type="region of interest" description="Disordered" evidence="2">
    <location>
        <begin position="1"/>
        <end position="25"/>
    </location>
</feature>
<feature type="region of interest" description="Disordered" evidence="2">
    <location>
        <begin position="43"/>
        <end position="76"/>
    </location>
</feature>
<feature type="compositionally biased region" description="Polar residues" evidence="2">
    <location>
        <begin position="1"/>
        <end position="10"/>
    </location>
</feature>
<feature type="compositionally biased region" description="Low complexity" evidence="2">
    <location>
        <begin position="43"/>
        <end position="56"/>
    </location>
</feature>
<feature type="compositionally biased region" description="Polar residues" evidence="2">
    <location>
        <begin position="64"/>
        <end position="76"/>
    </location>
</feature>
<protein>
    <recommendedName>
        <fullName>cAMP-dependent protein kinase inhibitor gamma</fullName>
        <shortName>PKI-gamma</shortName>
    </recommendedName>
</protein>
<comment type="function">
    <text evidence="1">Extremely potent competitive inhibitor of cAMP-dependent protein kinase activity, this protein interacts with the catalytic subunit of the enzyme after the cAMP-induced dissociation of its regulatory chains.</text>
</comment>
<comment type="similarity">
    <text evidence="3">Belongs to the PKI family.</text>
</comment>
<evidence type="ECO:0000250" key="1"/>
<evidence type="ECO:0000256" key="2">
    <source>
        <dbReference type="SAM" id="MobiDB-lite"/>
    </source>
</evidence>
<evidence type="ECO:0000305" key="3"/>